<sequence length="214" mass="24989">MEWDADDLLIEPTTEVENDYEDLCTQWVNERMAPDLLPFAEEIVSRVLDRIEAQRETLQLAIGTSSATSYRSVLMQTELERVKFVLRSYMRTRINKIDKYAQYIQSHPNLLLYLSSPERQYLLRHQQIVHRHYMDSFLREVPAKMNKLDDKVGNLSMVASPDMDTAVFCVVNESVEENFRVSENEYITLDKGDVLILRYSVISDYLRLGVVSLI</sequence>
<protein>
    <recommendedName>
        <fullName>DNA replication complex GINS protein sld5</fullName>
    </recommendedName>
</protein>
<accession>Q9P7C8</accession>
<proteinExistence type="evidence at protein level"/>
<feature type="chain" id="PRO_0000255434" description="DNA replication complex GINS protein sld5">
    <location>
        <begin position="1"/>
        <end position="214"/>
    </location>
</feature>
<gene>
    <name type="primary">sld5</name>
    <name type="ORF">SPBP4H10.21c</name>
</gene>
<dbReference type="EMBL" id="CU329671">
    <property type="protein sequence ID" value="CAB83179.1"/>
    <property type="molecule type" value="Genomic_DNA"/>
</dbReference>
<dbReference type="RefSeq" id="NP_596195.1">
    <property type="nucleotide sequence ID" value="NM_001022114.2"/>
</dbReference>
<dbReference type="SMR" id="Q9P7C8"/>
<dbReference type="BioGRID" id="277879">
    <property type="interactions" value="9"/>
</dbReference>
<dbReference type="FunCoup" id="Q9P7C8">
    <property type="interactions" value="527"/>
</dbReference>
<dbReference type="IntAct" id="Q9P7C8">
    <property type="interactions" value="2"/>
</dbReference>
<dbReference type="MINT" id="Q9P7C8"/>
<dbReference type="STRING" id="284812.Q9P7C8"/>
<dbReference type="iPTMnet" id="Q9P7C8"/>
<dbReference type="PaxDb" id="4896-SPBP4H10.21c.1"/>
<dbReference type="EnsemblFungi" id="SPBP4H10.21c.1">
    <property type="protein sequence ID" value="SPBP4H10.21c.1:pep"/>
    <property type="gene ID" value="SPBP4H10.21c"/>
</dbReference>
<dbReference type="GeneID" id="2541368"/>
<dbReference type="KEGG" id="spo:2541368"/>
<dbReference type="PomBase" id="SPBP4H10.21c">
    <property type="gene designation" value="sld5"/>
</dbReference>
<dbReference type="VEuPathDB" id="FungiDB:SPBP4H10.21c"/>
<dbReference type="eggNOG" id="KOG3176">
    <property type="taxonomic scope" value="Eukaryota"/>
</dbReference>
<dbReference type="HOGENOM" id="CLU_071893_1_1_1"/>
<dbReference type="InParanoid" id="Q9P7C8"/>
<dbReference type="OMA" id="ILETAWI"/>
<dbReference type="PhylomeDB" id="Q9P7C8"/>
<dbReference type="Reactome" id="R-SPO-176974">
    <property type="pathway name" value="Unwinding of DNA"/>
</dbReference>
<dbReference type="PRO" id="PR:Q9P7C8"/>
<dbReference type="Proteomes" id="UP000002485">
    <property type="component" value="Chromosome II"/>
</dbReference>
<dbReference type="GO" id="GO:0005829">
    <property type="term" value="C:cytosol"/>
    <property type="evidence" value="ECO:0007005"/>
    <property type="project" value="PomBase"/>
</dbReference>
<dbReference type="GO" id="GO:0000811">
    <property type="term" value="C:GINS complex"/>
    <property type="evidence" value="ECO:0000318"/>
    <property type="project" value="GO_Central"/>
</dbReference>
<dbReference type="GO" id="GO:0005634">
    <property type="term" value="C:nucleus"/>
    <property type="evidence" value="ECO:0007005"/>
    <property type="project" value="PomBase"/>
</dbReference>
<dbReference type="GO" id="GO:0007059">
    <property type="term" value="P:chromosome segregation"/>
    <property type="evidence" value="ECO:0007669"/>
    <property type="project" value="UniProtKB-KW"/>
</dbReference>
<dbReference type="GO" id="GO:0006270">
    <property type="term" value="P:DNA replication initiation"/>
    <property type="evidence" value="ECO:0000305"/>
    <property type="project" value="PomBase"/>
</dbReference>
<dbReference type="GO" id="GO:0000727">
    <property type="term" value="P:double-strand break repair via break-induced replication"/>
    <property type="evidence" value="ECO:0000318"/>
    <property type="project" value="GO_Central"/>
</dbReference>
<dbReference type="CDD" id="cd11711">
    <property type="entry name" value="GINS_A_Sld5"/>
    <property type="match status" value="1"/>
</dbReference>
<dbReference type="CDD" id="cd21692">
    <property type="entry name" value="GINS_B_Sld5"/>
    <property type="match status" value="1"/>
</dbReference>
<dbReference type="FunFam" id="1.20.58.1030:FF:000009">
    <property type="entry name" value="DNA replication complex GINS protein SLD5"/>
    <property type="match status" value="1"/>
</dbReference>
<dbReference type="Gene3D" id="1.20.58.1030">
    <property type="match status" value="1"/>
</dbReference>
<dbReference type="Gene3D" id="3.40.5.60">
    <property type="match status" value="1"/>
</dbReference>
<dbReference type="InterPro" id="IPR021151">
    <property type="entry name" value="GINS_A"/>
</dbReference>
<dbReference type="InterPro" id="IPR036224">
    <property type="entry name" value="GINS_bundle-like_dom_sf"/>
</dbReference>
<dbReference type="InterPro" id="IPR008591">
    <property type="entry name" value="GINS_Sld5"/>
</dbReference>
<dbReference type="InterPro" id="IPR031633">
    <property type="entry name" value="SLD5_C"/>
</dbReference>
<dbReference type="InterPro" id="IPR038749">
    <property type="entry name" value="Sld5_GINS_A"/>
</dbReference>
<dbReference type="PANTHER" id="PTHR21206:SF0">
    <property type="entry name" value="DNA REPLICATION COMPLEX GINS PROTEIN SLD5"/>
    <property type="match status" value="1"/>
</dbReference>
<dbReference type="PANTHER" id="PTHR21206">
    <property type="entry name" value="SLD5 PROTEIN"/>
    <property type="match status" value="1"/>
</dbReference>
<dbReference type="Pfam" id="PF05916">
    <property type="entry name" value="Sld5"/>
    <property type="match status" value="1"/>
</dbReference>
<dbReference type="Pfam" id="PF16922">
    <property type="entry name" value="SLD5_C"/>
    <property type="match status" value="1"/>
</dbReference>
<dbReference type="PIRSF" id="PIRSF007764">
    <property type="entry name" value="Sld5"/>
    <property type="match status" value="1"/>
</dbReference>
<dbReference type="SUPFAM" id="SSF158573">
    <property type="entry name" value="GINS helical bundle-like"/>
    <property type="match status" value="1"/>
</dbReference>
<dbReference type="SUPFAM" id="SSF160059">
    <property type="entry name" value="PriA/YqbF domain"/>
    <property type="match status" value="1"/>
</dbReference>
<name>SLD5_SCHPO</name>
<comment type="function">
    <text evidence="1">The GINS complex plays an essential role in the initiation of DNA replication. Has a role in chromosome segregation and is required for bir1 localization.</text>
</comment>
<comment type="subunit">
    <text evidence="1">Component of the GINS complex which is a heterotetramer of sld5, psf1, psf2 and psf3. Interacts with sld5.</text>
</comment>
<comment type="subcellular location">
    <subcellularLocation>
        <location evidence="2">Nucleus</location>
    </subcellularLocation>
</comment>
<comment type="similarity">
    <text evidence="3">Belongs to the GINS4/SLD5 family.</text>
</comment>
<keyword id="KW-0159">Chromosome partition</keyword>
<keyword id="KW-0235">DNA replication</keyword>
<keyword id="KW-0539">Nucleus</keyword>
<keyword id="KW-1185">Reference proteome</keyword>
<reference key="1">
    <citation type="journal article" date="2002" name="Nature">
        <title>The genome sequence of Schizosaccharomyces pombe.</title>
        <authorList>
            <person name="Wood V."/>
            <person name="Gwilliam R."/>
            <person name="Rajandream M.A."/>
            <person name="Lyne M.H."/>
            <person name="Lyne R."/>
            <person name="Stewart A."/>
            <person name="Sgouros J.G."/>
            <person name="Peat N."/>
            <person name="Hayles J."/>
            <person name="Baker S.G."/>
            <person name="Basham D."/>
            <person name="Bowman S."/>
            <person name="Brooks K."/>
            <person name="Brown D."/>
            <person name="Brown S."/>
            <person name="Chillingworth T."/>
            <person name="Churcher C.M."/>
            <person name="Collins M."/>
            <person name="Connor R."/>
            <person name="Cronin A."/>
            <person name="Davis P."/>
            <person name="Feltwell T."/>
            <person name="Fraser A."/>
            <person name="Gentles S."/>
            <person name="Goble A."/>
            <person name="Hamlin N."/>
            <person name="Harris D.E."/>
            <person name="Hidalgo J."/>
            <person name="Hodgson G."/>
            <person name="Holroyd S."/>
            <person name="Hornsby T."/>
            <person name="Howarth S."/>
            <person name="Huckle E.J."/>
            <person name="Hunt S."/>
            <person name="Jagels K."/>
            <person name="James K.D."/>
            <person name="Jones L."/>
            <person name="Jones M."/>
            <person name="Leather S."/>
            <person name="McDonald S."/>
            <person name="McLean J."/>
            <person name="Mooney P."/>
            <person name="Moule S."/>
            <person name="Mungall K.L."/>
            <person name="Murphy L.D."/>
            <person name="Niblett D."/>
            <person name="Odell C."/>
            <person name="Oliver K."/>
            <person name="O'Neil S."/>
            <person name="Pearson D."/>
            <person name="Quail M.A."/>
            <person name="Rabbinowitsch E."/>
            <person name="Rutherford K.M."/>
            <person name="Rutter S."/>
            <person name="Saunders D."/>
            <person name="Seeger K."/>
            <person name="Sharp S."/>
            <person name="Skelton J."/>
            <person name="Simmonds M.N."/>
            <person name="Squares R."/>
            <person name="Squares S."/>
            <person name="Stevens K."/>
            <person name="Taylor K."/>
            <person name="Taylor R.G."/>
            <person name="Tivey A."/>
            <person name="Walsh S.V."/>
            <person name="Warren T."/>
            <person name="Whitehead S."/>
            <person name="Woodward J.R."/>
            <person name="Volckaert G."/>
            <person name="Aert R."/>
            <person name="Robben J."/>
            <person name="Grymonprez B."/>
            <person name="Weltjens I."/>
            <person name="Vanstreels E."/>
            <person name="Rieger M."/>
            <person name="Schaefer M."/>
            <person name="Mueller-Auer S."/>
            <person name="Gabel C."/>
            <person name="Fuchs M."/>
            <person name="Duesterhoeft A."/>
            <person name="Fritzc C."/>
            <person name="Holzer E."/>
            <person name="Moestl D."/>
            <person name="Hilbert H."/>
            <person name="Borzym K."/>
            <person name="Langer I."/>
            <person name="Beck A."/>
            <person name="Lehrach H."/>
            <person name="Reinhardt R."/>
            <person name="Pohl T.M."/>
            <person name="Eger P."/>
            <person name="Zimmermann W."/>
            <person name="Wedler H."/>
            <person name="Wambutt R."/>
            <person name="Purnelle B."/>
            <person name="Goffeau A."/>
            <person name="Cadieu E."/>
            <person name="Dreano S."/>
            <person name="Gloux S."/>
            <person name="Lelaure V."/>
            <person name="Mottier S."/>
            <person name="Galibert F."/>
            <person name="Aves S.J."/>
            <person name="Xiang Z."/>
            <person name="Hunt C."/>
            <person name="Moore K."/>
            <person name="Hurst S.M."/>
            <person name="Lucas M."/>
            <person name="Rochet M."/>
            <person name="Gaillardin C."/>
            <person name="Tallada V.A."/>
            <person name="Garzon A."/>
            <person name="Thode G."/>
            <person name="Daga R.R."/>
            <person name="Cruzado L."/>
            <person name="Jimenez J."/>
            <person name="Sanchez M."/>
            <person name="del Rey F."/>
            <person name="Benito J."/>
            <person name="Dominguez A."/>
            <person name="Revuelta J.L."/>
            <person name="Moreno S."/>
            <person name="Armstrong J."/>
            <person name="Forsburg S.L."/>
            <person name="Cerutti L."/>
            <person name="Lowe T."/>
            <person name="McCombie W.R."/>
            <person name="Paulsen I."/>
            <person name="Potashkin J."/>
            <person name="Shpakovski G.V."/>
            <person name="Ussery D."/>
            <person name="Barrell B.G."/>
            <person name="Nurse P."/>
        </authorList>
    </citation>
    <scope>NUCLEOTIDE SEQUENCE [LARGE SCALE GENOMIC DNA]</scope>
    <source>
        <strain>972 / ATCC 24843</strain>
    </source>
</reference>
<reference key="2">
    <citation type="journal article" date="2005" name="Mol. Cell. Biol.">
        <title>Suppressors of Bir1p (Survivin) identify roles for the chromosomal passenger protein Pic1p (INCENP) and the replication initiation factor Psf2p in chromosome segregation.</title>
        <authorList>
            <person name="Huang H.-K."/>
            <person name="Bailis J.M."/>
            <person name="Leverson J.D."/>
            <person name="Gomez E.B."/>
            <person name="Forsburg S.L."/>
            <person name="Hunter T."/>
        </authorList>
    </citation>
    <scope>FUNCTION</scope>
    <scope>INTERACTION WITH PSF2</scope>
</reference>
<reference key="3">
    <citation type="journal article" date="2006" name="Nat. Biotechnol.">
        <title>ORFeome cloning and global analysis of protein localization in the fission yeast Schizosaccharomyces pombe.</title>
        <authorList>
            <person name="Matsuyama A."/>
            <person name="Arai R."/>
            <person name="Yashiroda Y."/>
            <person name="Shirai A."/>
            <person name="Kamata A."/>
            <person name="Sekido S."/>
            <person name="Kobayashi Y."/>
            <person name="Hashimoto A."/>
            <person name="Hamamoto M."/>
            <person name="Hiraoka Y."/>
            <person name="Horinouchi S."/>
            <person name="Yoshida M."/>
        </authorList>
    </citation>
    <scope>SUBCELLULAR LOCATION [LARGE SCALE ANALYSIS]</scope>
</reference>
<organism>
    <name type="scientific">Schizosaccharomyces pombe (strain 972 / ATCC 24843)</name>
    <name type="common">Fission yeast</name>
    <dbReference type="NCBI Taxonomy" id="284812"/>
    <lineage>
        <taxon>Eukaryota</taxon>
        <taxon>Fungi</taxon>
        <taxon>Dikarya</taxon>
        <taxon>Ascomycota</taxon>
        <taxon>Taphrinomycotina</taxon>
        <taxon>Schizosaccharomycetes</taxon>
        <taxon>Schizosaccharomycetales</taxon>
        <taxon>Schizosaccharomycetaceae</taxon>
        <taxon>Schizosaccharomyces</taxon>
    </lineage>
</organism>
<evidence type="ECO:0000269" key="1">
    <source>
    </source>
</evidence>
<evidence type="ECO:0000269" key="2">
    <source>
    </source>
</evidence>
<evidence type="ECO:0000305" key="3"/>